<feature type="chain" id="PRO_1000130034" description="Chaperonin GroEL">
    <location>
        <begin position="1"/>
        <end position="549"/>
    </location>
</feature>
<feature type="binding site" evidence="1">
    <location>
        <begin position="30"/>
        <end position="33"/>
    </location>
    <ligand>
        <name>ATP</name>
        <dbReference type="ChEBI" id="CHEBI:30616"/>
    </ligand>
</feature>
<feature type="binding site" evidence="1">
    <location>
        <position position="51"/>
    </location>
    <ligand>
        <name>ATP</name>
        <dbReference type="ChEBI" id="CHEBI:30616"/>
    </ligand>
</feature>
<feature type="binding site" evidence="1">
    <location>
        <begin position="87"/>
        <end position="91"/>
    </location>
    <ligand>
        <name>ATP</name>
        <dbReference type="ChEBI" id="CHEBI:30616"/>
    </ligand>
</feature>
<feature type="binding site" evidence="1">
    <location>
        <position position="415"/>
    </location>
    <ligand>
        <name>ATP</name>
        <dbReference type="ChEBI" id="CHEBI:30616"/>
    </ligand>
</feature>
<feature type="binding site" evidence="1">
    <location>
        <begin position="479"/>
        <end position="481"/>
    </location>
    <ligand>
        <name>ATP</name>
        <dbReference type="ChEBI" id="CHEBI:30616"/>
    </ligand>
</feature>
<feature type="binding site" evidence="1">
    <location>
        <position position="495"/>
    </location>
    <ligand>
        <name>ATP</name>
        <dbReference type="ChEBI" id="CHEBI:30616"/>
    </ligand>
</feature>
<reference key="1">
    <citation type="submission" date="2008-03" db="EMBL/GenBank/DDBJ databases">
        <title>Complete sequence of Leptothrix cholodnii SP-6.</title>
        <authorList>
            <consortium name="US DOE Joint Genome Institute"/>
            <person name="Copeland A."/>
            <person name="Lucas S."/>
            <person name="Lapidus A."/>
            <person name="Glavina del Rio T."/>
            <person name="Dalin E."/>
            <person name="Tice H."/>
            <person name="Bruce D."/>
            <person name="Goodwin L."/>
            <person name="Pitluck S."/>
            <person name="Chertkov O."/>
            <person name="Brettin T."/>
            <person name="Detter J.C."/>
            <person name="Han C."/>
            <person name="Kuske C.R."/>
            <person name="Schmutz J."/>
            <person name="Larimer F."/>
            <person name="Land M."/>
            <person name="Hauser L."/>
            <person name="Kyrpides N."/>
            <person name="Lykidis A."/>
            <person name="Emerson D."/>
            <person name="Richardson P."/>
        </authorList>
    </citation>
    <scope>NUCLEOTIDE SEQUENCE [LARGE SCALE GENOMIC DNA]</scope>
    <source>
        <strain>ATCC 51168 / LMG 8142 / SP-6</strain>
    </source>
</reference>
<gene>
    <name evidence="1" type="primary">groEL</name>
    <name evidence="1" type="synonym">groL</name>
    <name type="ordered locus">Lcho_0483</name>
</gene>
<accession>B1XXY9</accession>
<proteinExistence type="inferred from homology"/>
<evidence type="ECO:0000255" key="1">
    <source>
        <dbReference type="HAMAP-Rule" id="MF_00600"/>
    </source>
</evidence>
<sequence>MAAKDVIFGGEARARMVEGVNILANAVKVTLGPKGRNVVLERSFGAPTVTKDGVSVAKEIELKDKLQNMGAQMVKEVASKTSDNAGDGTTTATVLAQAIVREGMKYVAAGMNPMDLKRGIDKAVHALVAELKKASKATTTSKEIAQVGSISANSDESIGTIIANAMDKVGKEGVITVEDGKSLDNELDVVEGMQFDRGYLSPYFINNPEKQAALLDNPFVLLFDKKISNIRDLLPTLEQVAKAGRPLLIIAEEVDGEALATLVVNTIRGILKVVAVKAPGFGDRRKAMLEDIAILTGGKVIAEEVGLTLEKVTLADLGQAKRVEVGKENTTIIDGAGAAGDIEARVKQIRIQIEEATSDYDREKLQERVAKLAGGVALIKVGAATEVEMKEKKARVEDALHATRAAVEEGIVAGGGVALLRAKQAAGEIKGDNADQDAGIKLVLKAIEAPLREIVYNAGGEASVVVNAVLAGSGNYGFNAANDTYGDMIEMGILDPTKVTRTALQNAASVASLMLTTECMVAEAPKDEAAGGGMPGGMGGMGGMGGMDM</sequence>
<protein>
    <recommendedName>
        <fullName evidence="1">Chaperonin GroEL</fullName>
        <ecNumber evidence="1">5.6.1.7</ecNumber>
    </recommendedName>
    <alternativeName>
        <fullName evidence="1">60 kDa chaperonin</fullName>
    </alternativeName>
    <alternativeName>
        <fullName evidence="1">Chaperonin-60</fullName>
        <shortName evidence="1">Cpn60</shortName>
    </alternativeName>
</protein>
<dbReference type="EC" id="5.6.1.7" evidence="1"/>
<dbReference type="EMBL" id="CP001013">
    <property type="protein sequence ID" value="ACB32758.1"/>
    <property type="molecule type" value="Genomic_DNA"/>
</dbReference>
<dbReference type="RefSeq" id="WP_012345520.1">
    <property type="nucleotide sequence ID" value="NC_010524.1"/>
</dbReference>
<dbReference type="SMR" id="B1XXY9"/>
<dbReference type="STRING" id="395495.Lcho_0483"/>
<dbReference type="KEGG" id="lch:Lcho_0483"/>
<dbReference type="eggNOG" id="COG0459">
    <property type="taxonomic scope" value="Bacteria"/>
</dbReference>
<dbReference type="HOGENOM" id="CLU_016503_3_0_4"/>
<dbReference type="OrthoDB" id="9766614at2"/>
<dbReference type="Proteomes" id="UP000001693">
    <property type="component" value="Chromosome"/>
</dbReference>
<dbReference type="GO" id="GO:0005737">
    <property type="term" value="C:cytoplasm"/>
    <property type="evidence" value="ECO:0007669"/>
    <property type="project" value="UniProtKB-SubCell"/>
</dbReference>
<dbReference type="GO" id="GO:0005524">
    <property type="term" value="F:ATP binding"/>
    <property type="evidence" value="ECO:0007669"/>
    <property type="project" value="UniProtKB-UniRule"/>
</dbReference>
<dbReference type="GO" id="GO:0140662">
    <property type="term" value="F:ATP-dependent protein folding chaperone"/>
    <property type="evidence" value="ECO:0007669"/>
    <property type="project" value="InterPro"/>
</dbReference>
<dbReference type="GO" id="GO:0016853">
    <property type="term" value="F:isomerase activity"/>
    <property type="evidence" value="ECO:0007669"/>
    <property type="project" value="UniProtKB-KW"/>
</dbReference>
<dbReference type="GO" id="GO:0051082">
    <property type="term" value="F:unfolded protein binding"/>
    <property type="evidence" value="ECO:0007669"/>
    <property type="project" value="UniProtKB-UniRule"/>
</dbReference>
<dbReference type="GO" id="GO:0042026">
    <property type="term" value="P:protein refolding"/>
    <property type="evidence" value="ECO:0007669"/>
    <property type="project" value="UniProtKB-UniRule"/>
</dbReference>
<dbReference type="CDD" id="cd03344">
    <property type="entry name" value="GroEL"/>
    <property type="match status" value="1"/>
</dbReference>
<dbReference type="FunFam" id="1.10.560.10:FF:000001">
    <property type="entry name" value="60 kDa chaperonin"/>
    <property type="match status" value="1"/>
</dbReference>
<dbReference type="FunFam" id="3.50.7.10:FF:000001">
    <property type="entry name" value="60 kDa chaperonin"/>
    <property type="match status" value="1"/>
</dbReference>
<dbReference type="Gene3D" id="3.50.7.10">
    <property type="entry name" value="GroEL"/>
    <property type="match status" value="1"/>
</dbReference>
<dbReference type="Gene3D" id="1.10.560.10">
    <property type="entry name" value="GroEL-like equatorial domain"/>
    <property type="match status" value="1"/>
</dbReference>
<dbReference type="Gene3D" id="3.30.260.10">
    <property type="entry name" value="TCP-1-like chaperonin intermediate domain"/>
    <property type="match status" value="1"/>
</dbReference>
<dbReference type="HAMAP" id="MF_00600">
    <property type="entry name" value="CH60"/>
    <property type="match status" value="1"/>
</dbReference>
<dbReference type="InterPro" id="IPR018370">
    <property type="entry name" value="Chaperonin_Cpn60_CS"/>
</dbReference>
<dbReference type="InterPro" id="IPR001844">
    <property type="entry name" value="Cpn60/GroEL"/>
</dbReference>
<dbReference type="InterPro" id="IPR002423">
    <property type="entry name" value="Cpn60/GroEL/TCP-1"/>
</dbReference>
<dbReference type="InterPro" id="IPR027409">
    <property type="entry name" value="GroEL-like_apical_dom_sf"/>
</dbReference>
<dbReference type="InterPro" id="IPR027413">
    <property type="entry name" value="GROEL-like_equatorial_sf"/>
</dbReference>
<dbReference type="InterPro" id="IPR027410">
    <property type="entry name" value="TCP-1-like_intermed_sf"/>
</dbReference>
<dbReference type="NCBIfam" id="TIGR02348">
    <property type="entry name" value="GroEL"/>
    <property type="match status" value="1"/>
</dbReference>
<dbReference type="NCBIfam" id="NF000592">
    <property type="entry name" value="PRK00013.1"/>
    <property type="match status" value="1"/>
</dbReference>
<dbReference type="NCBIfam" id="NF009487">
    <property type="entry name" value="PRK12849.1"/>
    <property type="match status" value="1"/>
</dbReference>
<dbReference type="NCBIfam" id="NF009488">
    <property type="entry name" value="PRK12850.1"/>
    <property type="match status" value="1"/>
</dbReference>
<dbReference type="NCBIfam" id="NF009489">
    <property type="entry name" value="PRK12851.1"/>
    <property type="match status" value="1"/>
</dbReference>
<dbReference type="PANTHER" id="PTHR45633">
    <property type="entry name" value="60 KDA HEAT SHOCK PROTEIN, MITOCHONDRIAL"/>
    <property type="match status" value="1"/>
</dbReference>
<dbReference type="Pfam" id="PF00118">
    <property type="entry name" value="Cpn60_TCP1"/>
    <property type="match status" value="1"/>
</dbReference>
<dbReference type="PRINTS" id="PR00298">
    <property type="entry name" value="CHAPERONIN60"/>
</dbReference>
<dbReference type="SUPFAM" id="SSF52029">
    <property type="entry name" value="GroEL apical domain-like"/>
    <property type="match status" value="1"/>
</dbReference>
<dbReference type="SUPFAM" id="SSF48592">
    <property type="entry name" value="GroEL equatorial domain-like"/>
    <property type="match status" value="1"/>
</dbReference>
<dbReference type="SUPFAM" id="SSF54849">
    <property type="entry name" value="GroEL-intermediate domain like"/>
    <property type="match status" value="1"/>
</dbReference>
<dbReference type="PROSITE" id="PS00296">
    <property type="entry name" value="CHAPERONINS_CPN60"/>
    <property type="match status" value="1"/>
</dbReference>
<comment type="function">
    <text evidence="1">Together with its co-chaperonin GroES, plays an essential role in assisting protein folding. The GroEL-GroES system forms a nano-cage that allows encapsulation of the non-native substrate proteins and provides a physical environment optimized to promote and accelerate protein folding.</text>
</comment>
<comment type="catalytic activity">
    <reaction evidence="1">
        <text>ATP + H2O + a folded polypeptide = ADP + phosphate + an unfolded polypeptide.</text>
        <dbReference type="EC" id="5.6.1.7"/>
    </reaction>
</comment>
<comment type="subunit">
    <text evidence="1">Forms a cylinder of 14 subunits composed of two heptameric rings stacked back-to-back. Interacts with the co-chaperonin GroES.</text>
</comment>
<comment type="subcellular location">
    <subcellularLocation>
        <location evidence="1">Cytoplasm</location>
    </subcellularLocation>
</comment>
<comment type="similarity">
    <text evidence="1">Belongs to the chaperonin (HSP60) family.</text>
</comment>
<name>CH60_LEPCP</name>
<organism>
    <name type="scientific">Leptothrix cholodnii (strain ATCC 51168 / LMG 8142 / SP-6)</name>
    <name type="common">Leptothrix discophora (strain SP-6)</name>
    <dbReference type="NCBI Taxonomy" id="395495"/>
    <lineage>
        <taxon>Bacteria</taxon>
        <taxon>Pseudomonadati</taxon>
        <taxon>Pseudomonadota</taxon>
        <taxon>Betaproteobacteria</taxon>
        <taxon>Burkholderiales</taxon>
        <taxon>Sphaerotilaceae</taxon>
        <taxon>Leptothrix</taxon>
    </lineage>
</organism>
<keyword id="KW-0067">ATP-binding</keyword>
<keyword id="KW-0143">Chaperone</keyword>
<keyword id="KW-0963">Cytoplasm</keyword>
<keyword id="KW-0413">Isomerase</keyword>
<keyword id="KW-0547">Nucleotide-binding</keyword>
<keyword id="KW-1185">Reference proteome</keyword>